<name>FPG_VARPS</name>
<organism>
    <name type="scientific">Variovorax paradoxus (strain S110)</name>
    <dbReference type="NCBI Taxonomy" id="543728"/>
    <lineage>
        <taxon>Bacteria</taxon>
        <taxon>Pseudomonadati</taxon>
        <taxon>Pseudomonadota</taxon>
        <taxon>Betaproteobacteria</taxon>
        <taxon>Burkholderiales</taxon>
        <taxon>Comamonadaceae</taxon>
        <taxon>Variovorax</taxon>
    </lineage>
</organism>
<comment type="function">
    <text evidence="2">Involved in base excision repair of DNA damaged by oxidation or by mutagenic agents. Acts as a DNA glycosylase that recognizes and removes damaged bases. Has a preference for oxidized purines, such as 7,8-dihydro-8-oxoguanine (8-oxoG). Has AP (apurinic/apyrimidinic) lyase activity and introduces nicks in the DNA strand. Cleaves the DNA backbone by beta-delta elimination to generate a single-strand break at the site of the removed base with both 3'- and 5'-phosphates.</text>
</comment>
<comment type="catalytic activity">
    <reaction evidence="2">
        <text>Hydrolysis of DNA containing ring-opened 7-methylguanine residues, releasing 2,6-diamino-4-hydroxy-5-(N-methyl)formamidopyrimidine.</text>
        <dbReference type="EC" id="3.2.2.23"/>
    </reaction>
</comment>
<comment type="catalytic activity">
    <reaction evidence="2">
        <text>2'-deoxyribonucleotide-(2'-deoxyribose 5'-phosphate)-2'-deoxyribonucleotide-DNA = a 3'-end 2'-deoxyribonucleotide-(2,3-dehydro-2,3-deoxyribose 5'-phosphate)-DNA + a 5'-end 5'-phospho-2'-deoxyribonucleoside-DNA + H(+)</text>
        <dbReference type="Rhea" id="RHEA:66592"/>
        <dbReference type="Rhea" id="RHEA-COMP:13180"/>
        <dbReference type="Rhea" id="RHEA-COMP:16897"/>
        <dbReference type="Rhea" id="RHEA-COMP:17067"/>
        <dbReference type="ChEBI" id="CHEBI:15378"/>
        <dbReference type="ChEBI" id="CHEBI:136412"/>
        <dbReference type="ChEBI" id="CHEBI:157695"/>
        <dbReference type="ChEBI" id="CHEBI:167181"/>
        <dbReference type="EC" id="4.2.99.18"/>
    </reaction>
</comment>
<comment type="cofactor">
    <cofactor evidence="2">
        <name>Zn(2+)</name>
        <dbReference type="ChEBI" id="CHEBI:29105"/>
    </cofactor>
    <text evidence="2">Binds 1 zinc ion per subunit.</text>
</comment>
<comment type="subunit">
    <text evidence="2">Monomer.</text>
</comment>
<comment type="similarity">
    <text evidence="2">Belongs to the FPG family.</text>
</comment>
<dbReference type="EC" id="3.2.2.23" evidence="2"/>
<dbReference type="EC" id="4.2.99.18" evidence="2"/>
<dbReference type="EMBL" id="CP001635">
    <property type="protein sequence ID" value="ACS20952.1"/>
    <property type="molecule type" value="Genomic_DNA"/>
</dbReference>
<dbReference type="SMR" id="C5CYZ1"/>
<dbReference type="STRING" id="543728.Vapar_4341"/>
<dbReference type="KEGG" id="vap:Vapar_4341"/>
<dbReference type="eggNOG" id="COG0266">
    <property type="taxonomic scope" value="Bacteria"/>
</dbReference>
<dbReference type="HOGENOM" id="CLU_038423_1_1_4"/>
<dbReference type="OrthoDB" id="9800855at2"/>
<dbReference type="GO" id="GO:0034039">
    <property type="term" value="F:8-oxo-7,8-dihydroguanine DNA N-glycosylase activity"/>
    <property type="evidence" value="ECO:0007669"/>
    <property type="project" value="TreeGrafter"/>
</dbReference>
<dbReference type="GO" id="GO:0140078">
    <property type="term" value="F:class I DNA-(apurinic or apyrimidinic site) endonuclease activity"/>
    <property type="evidence" value="ECO:0007669"/>
    <property type="project" value="UniProtKB-EC"/>
</dbReference>
<dbReference type="GO" id="GO:0003684">
    <property type="term" value="F:damaged DNA binding"/>
    <property type="evidence" value="ECO:0007669"/>
    <property type="project" value="InterPro"/>
</dbReference>
<dbReference type="GO" id="GO:0008270">
    <property type="term" value="F:zinc ion binding"/>
    <property type="evidence" value="ECO:0007669"/>
    <property type="project" value="UniProtKB-UniRule"/>
</dbReference>
<dbReference type="GO" id="GO:0006284">
    <property type="term" value="P:base-excision repair"/>
    <property type="evidence" value="ECO:0007669"/>
    <property type="project" value="InterPro"/>
</dbReference>
<dbReference type="CDD" id="cd08966">
    <property type="entry name" value="EcFpg-like_N"/>
    <property type="match status" value="1"/>
</dbReference>
<dbReference type="FunFam" id="1.10.8.50:FF:000003">
    <property type="entry name" value="Formamidopyrimidine-DNA glycosylase"/>
    <property type="match status" value="1"/>
</dbReference>
<dbReference type="Gene3D" id="1.10.8.50">
    <property type="match status" value="1"/>
</dbReference>
<dbReference type="Gene3D" id="3.20.190.10">
    <property type="entry name" value="MutM-like, N-terminal"/>
    <property type="match status" value="1"/>
</dbReference>
<dbReference type="HAMAP" id="MF_00103">
    <property type="entry name" value="Fapy_DNA_glycosyl"/>
    <property type="match status" value="1"/>
</dbReference>
<dbReference type="InterPro" id="IPR015886">
    <property type="entry name" value="DNA_glyclase/AP_lyase_DNA-bd"/>
</dbReference>
<dbReference type="InterPro" id="IPR015887">
    <property type="entry name" value="DNA_glyclase_Znf_dom_DNA_BS"/>
</dbReference>
<dbReference type="InterPro" id="IPR020629">
    <property type="entry name" value="Formamido-pyr_DNA_Glyclase"/>
</dbReference>
<dbReference type="InterPro" id="IPR012319">
    <property type="entry name" value="FPG_cat"/>
</dbReference>
<dbReference type="InterPro" id="IPR035937">
    <property type="entry name" value="MutM-like_N-ter"/>
</dbReference>
<dbReference type="InterPro" id="IPR010979">
    <property type="entry name" value="Ribosomal_uS13-like_H2TH"/>
</dbReference>
<dbReference type="InterPro" id="IPR000214">
    <property type="entry name" value="Znf_DNA_glyclase/AP_lyase"/>
</dbReference>
<dbReference type="InterPro" id="IPR010663">
    <property type="entry name" value="Znf_FPG/IleRS"/>
</dbReference>
<dbReference type="NCBIfam" id="TIGR00577">
    <property type="entry name" value="fpg"/>
    <property type="match status" value="1"/>
</dbReference>
<dbReference type="NCBIfam" id="NF002211">
    <property type="entry name" value="PRK01103.1"/>
    <property type="match status" value="1"/>
</dbReference>
<dbReference type="PANTHER" id="PTHR22993">
    <property type="entry name" value="FORMAMIDOPYRIMIDINE-DNA GLYCOSYLASE"/>
    <property type="match status" value="1"/>
</dbReference>
<dbReference type="PANTHER" id="PTHR22993:SF9">
    <property type="entry name" value="FORMAMIDOPYRIMIDINE-DNA GLYCOSYLASE"/>
    <property type="match status" value="1"/>
</dbReference>
<dbReference type="Pfam" id="PF01149">
    <property type="entry name" value="Fapy_DNA_glyco"/>
    <property type="match status" value="1"/>
</dbReference>
<dbReference type="Pfam" id="PF06831">
    <property type="entry name" value="H2TH"/>
    <property type="match status" value="1"/>
</dbReference>
<dbReference type="Pfam" id="PF06827">
    <property type="entry name" value="zf-FPG_IleRS"/>
    <property type="match status" value="1"/>
</dbReference>
<dbReference type="SMART" id="SM00898">
    <property type="entry name" value="Fapy_DNA_glyco"/>
    <property type="match status" value="1"/>
</dbReference>
<dbReference type="SMART" id="SM01232">
    <property type="entry name" value="H2TH"/>
    <property type="match status" value="1"/>
</dbReference>
<dbReference type="SUPFAM" id="SSF57716">
    <property type="entry name" value="Glucocorticoid receptor-like (DNA-binding domain)"/>
    <property type="match status" value="1"/>
</dbReference>
<dbReference type="SUPFAM" id="SSF81624">
    <property type="entry name" value="N-terminal domain of MutM-like DNA repair proteins"/>
    <property type="match status" value="1"/>
</dbReference>
<dbReference type="SUPFAM" id="SSF46946">
    <property type="entry name" value="S13-like H2TH domain"/>
    <property type="match status" value="1"/>
</dbReference>
<dbReference type="PROSITE" id="PS51068">
    <property type="entry name" value="FPG_CAT"/>
    <property type="match status" value="1"/>
</dbReference>
<dbReference type="PROSITE" id="PS01242">
    <property type="entry name" value="ZF_FPG_1"/>
    <property type="match status" value="1"/>
</dbReference>
<dbReference type="PROSITE" id="PS51066">
    <property type="entry name" value="ZF_FPG_2"/>
    <property type="match status" value="1"/>
</dbReference>
<accession>C5CYZ1</accession>
<reference key="1">
    <citation type="journal article" date="2011" name="J. Bacteriol.">
        <title>Complete genome sequence of the metabolically versatile plant growth-promoting endophyte, Variovorax paradoxus S110.</title>
        <authorList>
            <person name="Han J.I."/>
            <person name="Choi H.K."/>
            <person name="Lee S.W."/>
            <person name="Orwin P.M."/>
            <person name="Kim J."/>
            <person name="Laroe S.L."/>
            <person name="Kim T.G."/>
            <person name="O'Neil J."/>
            <person name="Leadbetter J.R."/>
            <person name="Lee S.Y."/>
            <person name="Hur C.G."/>
            <person name="Spain J.C."/>
            <person name="Ovchinnikova G."/>
            <person name="Goodwin L."/>
            <person name="Han C."/>
        </authorList>
    </citation>
    <scope>NUCLEOTIDE SEQUENCE [LARGE SCALE GENOMIC DNA]</scope>
    <source>
        <strain>S110</strain>
    </source>
</reference>
<feature type="initiator methionine" description="Removed" evidence="1">
    <location>
        <position position="1"/>
    </location>
</feature>
<feature type="chain" id="PRO_1000202832" description="Formamidopyrimidine-DNA glycosylase">
    <location>
        <begin position="2"/>
        <end position="270"/>
    </location>
</feature>
<feature type="zinc finger region" description="FPG-type" evidence="2">
    <location>
        <begin position="236"/>
        <end position="270"/>
    </location>
</feature>
<feature type="active site" description="Schiff-base intermediate with DNA" evidence="2">
    <location>
        <position position="2"/>
    </location>
</feature>
<feature type="active site" description="Proton donor" evidence="2">
    <location>
        <position position="3"/>
    </location>
</feature>
<feature type="active site" description="Proton donor; for beta-elimination activity" evidence="2">
    <location>
        <position position="56"/>
    </location>
</feature>
<feature type="active site" description="Proton donor; for delta-elimination activity" evidence="2">
    <location>
        <position position="260"/>
    </location>
</feature>
<feature type="binding site" evidence="2">
    <location>
        <position position="89"/>
    </location>
    <ligand>
        <name>DNA</name>
        <dbReference type="ChEBI" id="CHEBI:16991"/>
    </ligand>
</feature>
<feature type="binding site" evidence="2">
    <location>
        <position position="107"/>
    </location>
    <ligand>
        <name>DNA</name>
        <dbReference type="ChEBI" id="CHEBI:16991"/>
    </ligand>
</feature>
<feature type="binding site" evidence="2">
    <location>
        <position position="151"/>
    </location>
    <ligand>
        <name>DNA</name>
        <dbReference type="ChEBI" id="CHEBI:16991"/>
    </ligand>
</feature>
<keyword id="KW-0227">DNA damage</keyword>
<keyword id="KW-0234">DNA repair</keyword>
<keyword id="KW-0238">DNA-binding</keyword>
<keyword id="KW-0326">Glycosidase</keyword>
<keyword id="KW-0378">Hydrolase</keyword>
<keyword id="KW-0456">Lyase</keyword>
<keyword id="KW-0479">Metal-binding</keyword>
<keyword id="KW-0511">Multifunctional enzyme</keyword>
<keyword id="KW-0862">Zinc</keyword>
<keyword id="KW-0863">Zinc-finger</keyword>
<proteinExistence type="inferred from homology"/>
<protein>
    <recommendedName>
        <fullName evidence="2">Formamidopyrimidine-DNA glycosylase</fullName>
        <shortName evidence="2">Fapy-DNA glycosylase</shortName>
        <ecNumber evidence="2">3.2.2.23</ecNumber>
    </recommendedName>
    <alternativeName>
        <fullName evidence="2">DNA-(apurinic or apyrimidinic site) lyase MutM</fullName>
        <shortName evidence="2">AP lyase MutM</shortName>
        <ecNumber evidence="2">4.2.99.18</ecNumber>
    </alternativeName>
</protein>
<gene>
    <name evidence="2" type="primary">mutM</name>
    <name evidence="2" type="synonym">fpg</name>
    <name type="ordered locus">Vapar_4341</name>
</gene>
<evidence type="ECO:0000250" key="1"/>
<evidence type="ECO:0000255" key="2">
    <source>
        <dbReference type="HAMAP-Rule" id="MF_00103"/>
    </source>
</evidence>
<sequence length="270" mass="29588">MPELPEVEVTRRGFAERIAGARIDAVRIGKPLRWALMVMPEALVGRRVLQVRRRGKYLLIDLDRGLLLLHLGMSGSLRFDAALPAPGVHDHFDLVTELGTLRLNDPRRFGAVVYVEDEAAPWAIKLLGGLGMEPLGDAFDLDAFHAGLRKRKAAVKQVLLAGDVVVGVGNIYASEALFLAGIRPTLSAARISRPRAARLHAAVREILARAVEKGGSTLRDFSNVEGQSGYFQLEATVYGRAGEPCRVCATPIRLLRQGQRSTYYCPNCQK</sequence>